<protein>
    <recommendedName>
        <fullName>Homeobox protein Nkx-3.2</fullName>
    </recommendedName>
    <alternativeName>
        <fullName>Bagpipe homeobox protein homolog 1</fullName>
    </alternativeName>
    <alternativeName>
        <fullName>Xbap</fullName>
    </alternativeName>
</protein>
<gene>
    <name type="primary">nkx3-2</name>
    <name evidence="6" type="synonym">bap</name>
    <name type="synonym">bapx1</name>
</gene>
<accession>P70061</accession>
<name>NKX32_XENLA</name>
<feature type="chain" id="PRO_0000271891" description="Homeobox protein Nkx-3.2">
    <location>
        <begin position="1"/>
        <end position="329"/>
    </location>
</feature>
<feature type="DNA-binding region" description="Homeobox" evidence="2">
    <location>
        <begin position="202"/>
        <end position="261"/>
    </location>
</feature>
<feature type="region of interest" description="Disordered" evidence="3">
    <location>
        <begin position="107"/>
        <end position="188"/>
    </location>
</feature>
<feature type="compositionally biased region" description="Gly residues" evidence="3">
    <location>
        <begin position="110"/>
        <end position="124"/>
    </location>
</feature>
<feature type="compositionally biased region" description="Basic and acidic residues" evidence="3">
    <location>
        <begin position="138"/>
        <end position="160"/>
    </location>
</feature>
<organism>
    <name type="scientific">Xenopus laevis</name>
    <name type="common">African clawed frog</name>
    <dbReference type="NCBI Taxonomy" id="8355"/>
    <lineage>
        <taxon>Eukaryota</taxon>
        <taxon>Metazoa</taxon>
        <taxon>Chordata</taxon>
        <taxon>Craniata</taxon>
        <taxon>Vertebrata</taxon>
        <taxon>Euteleostomi</taxon>
        <taxon>Amphibia</taxon>
        <taxon>Batrachia</taxon>
        <taxon>Anura</taxon>
        <taxon>Pipoidea</taxon>
        <taxon>Pipidae</taxon>
        <taxon>Xenopodinae</taxon>
        <taxon>Xenopus</taxon>
        <taxon>Xenopus</taxon>
    </lineage>
</organism>
<dbReference type="EMBL" id="U75487">
    <property type="protein sequence ID" value="AAB82336.1"/>
    <property type="molecule type" value="mRNA"/>
</dbReference>
<dbReference type="RefSeq" id="NP_001079282.1">
    <property type="nucleotide sequence ID" value="NM_001085813.1"/>
</dbReference>
<dbReference type="SMR" id="P70061"/>
<dbReference type="GeneID" id="378569"/>
<dbReference type="KEGG" id="xla:378569"/>
<dbReference type="AGR" id="Xenbase:XB-GENE-876836"/>
<dbReference type="CTD" id="378569"/>
<dbReference type="Xenbase" id="XB-GENE-876836">
    <property type="gene designation" value="nkx3-2.S"/>
</dbReference>
<dbReference type="OMA" id="PACWRTM"/>
<dbReference type="OrthoDB" id="6159439at2759"/>
<dbReference type="Proteomes" id="UP000186698">
    <property type="component" value="Chromosome 1S"/>
</dbReference>
<dbReference type="Bgee" id="378569">
    <property type="expression patterns" value="Expressed in stomach and 8 other cell types or tissues"/>
</dbReference>
<dbReference type="GO" id="GO:0005634">
    <property type="term" value="C:nucleus"/>
    <property type="evidence" value="ECO:0000318"/>
    <property type="project" value="GO_Central"/>
</dbReference>
<dbReference type="GO" id="GO:0003677">
    <property type="term" value="F:DNA binding"/>
    <property type="evidence" value="ECO:0000250"/>
    <property type="project" value="UniProtKB"/>
</dbReference>
<dbReference type="GO" id="GO:0000981">
    <property type="term" value="F:DNA-binding transcription factor activity, RNA polymerase II-specific"/>
    <property type="evidence" value="ECO:0000318"/>
    <property type="project" value="GO_Central"/>
</dbReference>
<dbReference type="GO" id="GO:0000978">
    <property type="term" value="F:RNA polymerase II cis-regulatory region sequence-specific DNA binding"/>
    <property type="evidence" value="ECO:0000318"/>
    <property type="project" value="GO_Central"/>
</dbReference>
<dbReference type="GO" id="GO:0030154">
    <property type="term" value="P:cell differentiation"/>
    <property type="evidence" value="ECO:0000318"/>
    <property type="project" value="GO_Central"/>
</dbReference>
<dbReference type="GO" id="GO:0045944">
    <property type="term" value="P:positive regulation of transcription by RNA polymerase II"/>
    <property type="evidence" value="ECO:0000250"/>
    <property type="project" value="UniProtKB"/>
</dbReference>
<dbReference type="GO" id="GO:0006357">
    <property type="term" value="P:regulation of transcription by RNA polymerase II"/>
    <property type="evidence" value="ECO:0000318"/>
    <property type="project" value="GO_Central"/>
</dbReference>
<dbReference type="CDD" id="cd00086">
    <property type="entry name" value="homeodomain"/>
    <property type="match status" value="1"/>
</dbReference>
<dbReference type="FunFam" id="1.10.10.60:FF:000225">
    <property type="entry name" value="NK3 homeobox 2"/>
    <property type="match status" value="1"/>
</dbReference>
<dbReference type="Gene3D" id="1.10.10.60">
    <property type="entry name" value="Homeodomain-like"/>
    <property type="match status" value="1"/>
</dbReference>
<dbReference type="InterPro" id="IPR001356">
    <property type="entry name" value="HD"/>
</dbReference>
<dbReference type="InterPro" id="IPR020479">
    <property type="entry name" value="HD_metazoa"/>
</dbReference>
<dbReference type="InterPro" id="IPR017970">
    <property type="entry name" value="Homeobox_CS"/>
</dbReference>
<dbReference type="InterPro" id="IPR050394">
    <property type="entry name" value="Homeobox_NK-like"/>
</dbReference>
<dbReference type="InterPro" id="IPR009057">
    <property type="entry name" value="Homeodomain-like_sf"/>
</dbReference>
<dbReference type="PANTHER" id="PTHR24340">
    <property type="entry name" value="HOMEOBOX PROTEIN NKX"/>
    <property type="match status" value="1"/>
</dbReference>
<dbReference type="PANTHER" id="PTHR24340:SF34">
    <property type="entry name" value="HOMEOBOX PROTEIN NKX-3.2"/>
    <property type="match status" value="1"/>
</dbReference>
<dbReference type="Pfam" id="PF00046">
    <property type="entry name" value="Homeodomain"/>
    <property type="match status" value="1"/>
</dbReference>
<dbReference type="PRINTS" id="PR00024">
    <property type="entry name" value="HOMEOBOX"/>
</dbReference>
<dbReference type="SMART" id="SM00389">
    <property type="entry name" value="HOX"/>
    <property type="match status" value="1"/>
</dbReference>
<dbReference type="SUPFAM" id="SSF46689">
    <property type="entry name" value="Homeodomain-like"/>
    <property type="match status" value="1"/>
</dbReference>
<dbReference type="PROSITE" id="PS00027">
    <property type="entry name" value="HOMEOBOX_1"/>
    <property type="match status" value="1"/>
</dbReference>
<dbReference type="PROSITE" id="PS50071">
    <property type="entry name" value="HOMEOBOX_2"/>
    <property type="match status" value="1"/>
</dbReference>
<reference evidence="7 8" key="1">
    <citation type="journal article" date="1997" name="Dev. Biol.">
        <title>Xbap, a vertebrate gene related to bagpipe, is expressed in developing craniofacial structures and in anterior gut muscle.</title>
        <authorList>
            <person name="Newman C.S."/>
            <person name="Grow M.W."/>
            <person name="Cleaver O."/>
            <person name="Chia F."/>
            <person name="Krieg P."/>
        </authorList>
    </citation>
    <scope>NUCLEOTIDE SEQUENCE [MRNA]</scope>
    <scope>TISSUE SPECIFICITY</scope>
    <scope>DEVELOPMENTAL STAGE</scope>
    <source>
        <tissue evidence="5">Embryonic head</tissue>
    </source>
</reference>
<reference evidence="7" key="2">
    <citation type="journal article" date="2004" name="Development">
        <title>Function and regulation of FoxF1 during Xenopus gut development.</title>
        <authorList>
            <person name="Tseng H.-T."/>
            <person name="Shah R."/>
            <person name="Jamrich M."/>
        </authorList>
    </citation>
    <scope>TISSUE SPECIFICITY</scope>
    <scope>INDUCTION</scope>
</reference>
<comment type="subcellular location">
    <subcellularLocation>
        <location evidence="7">Nucleus</location>
    </subcellularLocation>
</comment>
<comment type="tissue specificity">
    <text evidence="4 5">First expressed in developing facial cartilage in early tailbud embryos, with expression localized to the basihyobranchial, palatoquadrate and possibly Meckel's cartilages. Shortly after, a second area of expression is seen in the musculature of the anterior gut. During late embryogenesis, gut expression extends into hindgut tissues. In adults, expressed at a high level in the kidney, pancreas, spleen and stomach and at a slightly lower level in the intestine, skeletal muscle and tongue. Adult heart, liver and lung show little or no expression.</text>
</comment>
<comment type="developmental stage">
    <text evidence="5">First expressed during late neurula stage (stage 18). Levels increase slowly up to the tailbud stage (stage 28), then increase sharply before remaining approximately constant through the remaining tailbud and tadpole stages (stages 30-44).</text>
</comment>
<comment type="induction">
    <text evidence="4">By foxf1-B.</text>
</comment>
<comment type="similarity">
    <text evidence="1">Belongs to the NK-3 homeobox family.</text>
</comment>
<sequence length="329" mass="36000">MFRGPLDTPWAADVSPSGPRGIKAGRSALLVPILGSIWGAWRPEPGATRYRTLDPMAAVRSSSRLTPFSIQAILNRKEERAHTFPRLATAVSPACCWRIFGESEAEGLGSPCGGAPGAGAGGEPSGWDSDSALSEEGELGRPGDIGERKKQRPLEARAKGEDEEETPGCSDCEIGASVPDPSPPDEDPKCEQLMLEPPKQRKKRSRAAFSHAQVFELERRFNHQRYLSGPERADLAASLKLTETQVKIWFQNRRYKTKRRQMATDLLAAAPAAKKVAVKVLVRDDQRQYHPGEVLHPSLLPLQAPYFYPYYCALPGWTLSAAACSRGTP</sequence>
<keyword id="KW-0217">Developmental protein</keyword>
<keyword id="KW-0238">DNA-binding</keyword>
<keyword id="KW-0371">Homeobox</keyword>
<keyword id="KW-0539">Nucleus</keyword>
<keyword id="KW-1185">Reference proteome</keyword>
<proteinExistence type="evidence at transcript level"/>
<evidence type="ECO:0000255" key="1"/>
<evidence type="ECO:0000255" key="2">
    <source>
        <dbReference type="PROSITE-ProRule" id="PRU00108"/>
    </source>
</evidence>
<evidence type="ECO:0000256" key="3">
    <source>
        <dbReference type="SAM" id="MobiDB-lite"/>
    </source>
</evidence>
<evidence type="ECO:0000269" key="4">
    <source>
    </source>
</evidence>
<evidence type="ECO:0000269" key="5">
    <source>
    </source>
</evidence>
<evidence type="ECO:0000303" key="6">
    <source>
    </source>
</evidence>
<evidence type="ECO:0000305" key="7"/>
<evidence type="ECO:0000312" key="8">
    <source>
        <dbReference type="EMBL" id="AAB82336.1"/>
    </source>
</evidence>